<comment type="subcellular location">
    <subcellularLocation>
        <location evidence="2">Cell membrane</location>
        <topology evidence="2">Multi-pass membrane protein</topology>
    </subcellularLocation>
</comment>
<comment type="similarity">
    <text evidence="2">Belongs to the SURF1 family.</text>
</comment>
<sequence length="226" mass="25861">MKTNLVVLITFTILISLGFWQLSRLKEKKLFLASMQANLTSPAINLAEIQDSLPYHKVKITGQFLPNKDIYLYGRRSMSSGKDGYYLVTPFKTIEDKVILVARGWFSNRNKIIITQATNDRQHEIIGVTMPSEKTRSYLPANDIKNNVWLTLDLKEASQTLELNLEDFYIIAEGKDISNLDILLPLSINHLAAIRNDHLEYALTWFGLAISLIVIYVIYRRNVISV</sequence>
<accession>Q4UN32</accession>
<protein>
    <recommendedName>
        <fullName>SURF1-like protein</fullName>
    </recommendedName>
</protein>
<name>SURF1_RICFE</name>
<feature type="chain" id="PRO_0000286486" description="SURF1-like protein">
    <location>
        <begin position="1"/>
        <end position="226"/>
    </location>
</feature>
<feature type="transmembrane region" description="Helical" evidence="1">
    <location>
        <begin position="3"/>
        <end position="23"/>
    </location>
</feature>
<feature type="transmembrane region" description="Helical" evidence="1">
    <location>
        <begin position="199"/>
        <end position="219"/>
    </location>
</feature>
<proteinExistence type="inferred from homology"/>
<gene>
    <name type="ordered locus">RF_0175</name>
</gene>
<reference key="1">
    <citation type="journal article" date="2005" name="PLoS Biol.">
        <title>The genome sequence of Rickettsia felis identifies the first putative conjugative plasmid in an obligate intracellular parasite.</title>
        <authorList>
            <person name="Ogata H."/>
            <person name="Renesto P."/>
            <person name="Audic S."/>
            <person name="Robert C."/>
            <person name="Blanc G."/>
            <person name="Fournier P.-E."/>
            <person name="Parinello H."/>
            <person name="Claverie J.-M."/>
            <person name="Raoult D."/>
        </authorList>
    </citation>
    <scope>NUCLEOTIDE SEQUENCE [LARGE SCALE GENOMIC DNA]</scope>
    <source>
        <strain>ATCC VR-1525 / URRWXCal2</strain>
    </source>
</reference>
<organism>
    <name type="scientific">Rickettsia felis (strain ATCC VR-1525 / URRWXCal2)</name>
    <name type="common">Rickettsia azadi</name>
    <dbReference type="NCBI Taxonomy" id="315456"/>
    <lineage>
        <taxon>Bacteria</taxon>
        <taxon>Pseudomonadati</taxon>
        <taxon>Pseudomonadota</taxon>
        <taxon>Alphaproteobacteria</taxon>
        <taxon>Rickettsiales</taxon>
        <taxon>Rickettsiaceae</taxon>
        <taxon>Rickettsieae</taxon>
        <taxon>Rickettsia</taxon>
        <taxon>spotted fever group</taxon>
    </lineage>
</organism>
<dbReference type="EMBL" id="CP000053">
    <property type="protein sequence ID" value="AAY61026.1"/>
    <property type="molecule type" value="Genomic_DNA"/>
</dbReference>
<dbReference type="SMR" id="Q4UN32"/>
<dbReference type="STRING" id="315456.RF_0175"/>
<dbReference type="KEGG" id="rfe:RF_0175"/>
<dbReference type="eggNOG" id="COG3346">
    <property type="taxonomic scope" value="Bacteria"/>
</dbReference>
<dbReference type="HOGENOM" id="CLU_047737_4_1_5"/>
<dbReference type="OrthoDB" id="6079986at2"/>
<dbReference type="Proteomes" id="UP000008548">
    <property type="component" value="Chromosome"/>
</dbReference>
<dbReference type="GO" id="GO:0005886">
    <property type="term" value="C:plasma membrane"/>
    <property type="evidence" value="ECO:0007669"/>
    <property type="project" value="UniProtKB-SubCell"/>
</dbReference>
<dbReference type="CDD" id="cd06662">
    <property type="entry name" value="SURF1"/>
    <property type="match status" value="1"/>
</dbReference>
<dbReference type="InterPro" id="IPR002994">
    <property type="entry name" value="Surf1/Shy1"/>
</dbReference>
<dbReference type="InterPro" id="IPR045214">
    <property type="entry name" value="Surf1/Surf4"/>
</dbReference>
<dbReference type="PANTHER" id="PTHR23427">
    <property type="entry name" value="SURFEIT LOCUS PROTEIN"/>
    <property type="match status" value="1"/>
</dbReference>
<dbReference type="PANTHER" id="PTHR23427:SF2">
    <property type="entry name" value="SURFEIT LOCUS PROTEIN 1"/>
    <property type="match status" value="1"/>
</dbReference>
<dbReference type="Pfam" id="PF02104">
    <property type="entry name" value="SURF1"/>
    <property type="match status" value="1"/>
</dbReference>
<dbReference type="PROSITE" id="PS50895">
    <property type="entry name" value="SURF1"/>
    <property type="match status" value="1"/>
</dbReference>
<evidence type="ECO:0000255" key="1"/>
<evidence type="ECO:0000305" key="2"/>
<keyword id="KW-1003">Cell membrane</keyword>
<keyword id="KW-0472">Membrane</keyword>
<keyword id="KW-0812">Transmembrane</keyword>
<keyword id="KW-1133">Transmembrane helix</keyword>